<accession>Q255D7</accession>
<reference key="1">
    <citation type="journal article" date="2006" name="DNA Res.">
        <title>Genome sequence of the cat pathogen, Chlamydophila felis.</title>
        <authorList>
            <person name="Azuma Y."/>
            <person name="Hirakawa H."/>
            <person name="Yamashita A."/>
            <person name="Cai Y."/>
            <person name="Rahman M.A."/>
            <person name="Suzuki H."/>
            <person name="Mitaku S."/>
            <person name="Toh H."/>
            <person name="Goto S."/>
            <person name="Murakami T."/>
            <person name="Sugi K."/>
            <person name="Hayashi H."/>
            <person name="Fukushi H."/>
            <person name="Hattori M."/>
            <person name="Kuhara S."/>
            <person name="Shirai M."/>
        </authorList>
    </citation>
    <scope>NUCLEOTIDE SEQUENCE [LARGE SCALE GENOMIC DNA]</scope>
    <source>
        <strain>Fe/C-56</strain>
    </source>
</reference>
<sequence length="208" mass="23866">MSSQIKLTKNAYRLEKIKLARLETYLPTLKLKMALLQVEVANAVRESSASIQAYEEARESIYAFAELFSIPLYVDAIANSFKIEKVEKGYENITGVEVPVVKNIVLSESSYSVLDTPIWIDTLVAYSREFVINKVRSEVAREKQRILEEELRNVSIRVNLFEKKLIPETTRMIKKIAIFLSDRSITDVGQVKMAKKKIQQRKEESECA</sequence>
<keyword id="KW-0066">ATP synthesis</keyword>
<keyword id="KW-0375">Hydrogen ion transport</keyword>
<keyword id="KW-0406">Ion transport</keyword>
<keyword id="KW-0813">Transport</keyword>
<organism>
    <name type="scientific">Chlamydia felis (strain Fe/C-56)</name>
    <name type="common">Chlamydophila felis</name>
    <dbReference type="NCBI Taxonomy" id="264202"/>
    <lineage>
        <taxon>Bacteria</taxon>
        <taxon>Pseudomonadati</taxon>
        <taxon>Chlamydiota</taxon>
        <taxon>Chlamydiia</taxon>
        <taxon>Chlamydiales</taxon>
        <taxon>Chlamydiaceae</taxon>
        <taxon>Chlamydia/Chlamydophila group</taxon>
        <taxon>Chlamydia</taxon>
    </lineage>
</organism>
<proteinExistence type="inferred from homology"/>
<gene>
    <name evidence="1" type="primary">atpD</name>
    <name type="ordered locus">CF0329</name>
</gene>
<evidence type="ECO:0000255" key="1">
    <source>
        <dbReference type="HAMAP-Rule" id="MF_00271"/>
    </source>
</evidence>
<name>VATD_CHLFF</name>
<dbReference type="EMBL" id="AP006861">
    <property type="protein sequence ID" value="BAE81101.1"/>
    <property type="molecule type" value="Genomic_DNA"/>
</dbReference>
<dbReference type="RefSeq" id="WP_011457881.1">
    <property type="nucleotide sequence ID" value="NC_007899.1"/>
</dbReference>
<dbReference type="SMR" id="Q255D7"/>
<dbReference type="STRING" id="264202.CF0329"/>
<dbReference type="KEGG" id="cfe:CF0329"/>
<dbReference type="eggNOG" id="COG1394">
    <property type="taxonomic scope" value="Bacteria"/>
</dbReference>
<dbReference type="HOGENOM" id="CLU_113661_0_0_0"/>
<dbReference type="OrthoDB" id="5637912at2"/>
<dbReference type="Proteomes" id="UP000001260">
    <property type="component" value="Chromosome"/>
</dbReference>
<dbReference type="GO" id="GO:0005524">
    <property type="term" value="F:ATP binding"/>
    <property type="evidence" value="ECO:0007669"/>
    <property type="project" value="UniProtKB-UniRule"/>
</dbReference>
<dbReference type="GO" id="GO:0046933">
    <property type="term" value="F:proton-transporting ATP synthase activity, rotational mechanism"/>
    <property type="evidence" value="ECO:0007669"/>
    <property type="project" value="UniProtKB-UniRule"/>
</dbReference>
<dbReference type="GO" id="GO:0046961">
    <property type="term" value="F:proton-transporting ATPase activity, rotational mechanism"/>
    <property type="evidence" value="ECO:0007669"/>
    <property type="project" value="InterPro"/>
</dbReference>
<dbReference type="GO" id="GO:0042777">
    <property type="term" value="P:proton motive force-driven plasma membrane ATP synthesis"/>
    <property type="evidence" value="ECO:0007669"/>
    <property type="project" value="UniProtKB-UniRule"/>
</dbReference>
<dbReference type="Gene3D" id="1.10.287.3240">
    <property type="match status" value="1"/>
</dbReference>
<dbReference type="HAMAP" id="MF_00271">
    <property type="entry name" value="ATP_synth_D_arch"/>
    <property type="match status" value="1"/>
</dbReference>
<dbReference type="InterPro" id="IPR002699">
    <property type="entry name" value="V_ATPase_D"/>
</dbReference>
<dbReference type="NCBIfam" id="NF002565">
    <property type="entry name" value="PRK02195.1"/>
    <property type="match status" value="1"/>
</dbReference>
<dbReference type="Pfam" id="PF01813">
    <property type="entry name" value="ATP-synt_D"/>
    <property type="match status" value="1"/>
</dbReference>
<comment type="function">
    <text evidence="1">Produces ATP from ADP in the presence of a proton gradient across the membrane.</text>
</comment>
<comment type="similarity">
    <text evidence="1">Belongs to the V-ATPase D subunit family.</text>
</comment>
<feature type="chain" id="PRO_1000059149" description="V-type ATP synthase subunit D">
    <location>
        <begin position="1"/>
        <end position="208"/>
    </location>
</feature>
<protein>
    <recommendedName>
        <fullName evidence="1">V-type ATP synthase subunit D</fullName>
    </recommendedName>
    <alternativeName>
        <fullName evidence="1">V-ATPase subunit D</fullName>
    </alternativeName>
</protein>